<accession>Q6YQX2</accession>
<comment type="function">
    <text evidence="1">Involved in mRNA degradation. Catalyzes the phosphorolysis of single-stranded polyribonucleotides processively in the 3'- to 5'-direction.</text>
</comment>
<comment type="catalytic activity">
    <reaction evidence="1">
        <text>RNA(n+1) + phosphate = RNA(n) + a ribonucleoside 5'-diphosphate</text>
        <dbReference type="Rhea" id="RHEA:22096"/>
        <dbReference type="Rhea" id="RHEA-COMP:14527"/>
        <dbReference type="Rhea" id="RHEA-COMP:17342"/>
        <dbReference type="ChEBI" id="CHEBI:43474"/>
        <dbReference type="ChEBI" id="CHEBI:57930"/>
        <dbReference type="ChEBI" id="CHEBI:140395"/>
        <dbReference type="EC" id="2.7.7.8"/>
    </reaction>
</comment>
<comment type="cofactor">
    <cofactor evidence="1">
        <name>Mg(2+)</name>
        <dbReference type="ChEBI" id="CHEBI:18420"/>
    </cofactor>
</comment>
<comment type="subcellular location">
    <subcellularLocation>
        <location evidence="1">Cytoplasm</location>
    </subcellularLocation>
</comment>
<comment type="similarity">
    <text evidence="1">Belongs to the polyribonucleotide nucleotidyltransferase family.</text>
</comment>
<sequence>MLKKVFETTNLKDSFQVEIGTYARNVDASILVRYQDTVVLTTTVFSRKPNNLDFLPLTVIYQEKLYAAGKIPGSFLRREGRSNDHEILTSRLIDRSLRPLFPDYFQQEVQVINTVLSLDPDFKSELASMLGSSLSLLISEIPFFEAISGVYVGKINDKFIINPTLQQLANSTLHLMVAGTKHNVTMIEAHANEVSEQDFLEAINFAHQYIKKLCLFQENIKQQFAPAKITNTLHQTEQTQQQAFFAKHQSQVKQAILSCNSKNDLQQLKEQILDQAKQTPFFKTIDTATVFDYEAHKKHLQTTETLFQKLSKQETRSLILQEKIRPDKRGLEEIRTLESQIDLLPRAHGSALFTRGQTQSLAAVTLGCLSESKIIDGLSDEQNKRFMLHYNFPPFSVGAVGRYTAPSRREIGHGTLAEKAISQVLPEEKDFPYTIRVVSEILESNGSSSQATVCASSLALMASGVPLKKAVAGMSVGLVFDQATNKYVILSDIQGLEDHVGDMDLKIAGTNKGITALQMDLKIQGIHFKILQEAFLQAKKGRLHILEHMSQTISQPRLEVSKYAPKVCMMQIKPEKIRDIIGSGGKIINQIIESHDGVKIDIEQDGRVFVMHSNLETVKKTVAFIESLIQEIQIGTCYQASILRFLSDKQGKMIGAVAQVCPGIEGLIHVNQKKFQKITDVLKIGETVSVKCTKINDRGRIDFLLLPKNTQEKNS</sequence>
<name>PNP_ONYPE</name>
<evidence type="ECO:0000255" key="1">
    <source>
        <dbReference type="HAMAP-Rule" id="MF_01595"/>
    </source>
</evidence>
<proteinExistence type="inferred from homology"/>
<reference key="1">
    <citation type="journal article" date="2004" name="Nat. Genet.">
        <title>Reductive evolution suggested from the complete genome sequence of a plant-pathogenic phytoplasma.</title>
        <authorList>
            <person name="Oshima K."/>
            <person name="Kakizawa S."/>
            <person name="Nishigawa H."/>
            <person name="Jung H.-Y."/>
            <person name="Wei W."/>
            <person name="Suzuki S."/>
            <person name="Arashida R."/>
            <person name="Nakata D."/>
            <person name="Miyata S."/>
            <person name="Ugaki M."/>
            <person name="Namba S."/>
        </authorList>
    </citation>
    <scope>NUCLEOTIDE SEQUENCE [LARGE SCALE GENOMIC DNA]</scope>
    <source>
        <strain>OY-M</strain>
    </source>
</reference>
<organism>
    <name type="scientific">Onion yellows phytoplasma (strain OY-M)</name>
    <dbReference type="NCBI Taxonomy" id="262768"/>
    <lineage>
        <taxon>Bacteria</taxon>
        <taxon>Bacillati</taxon>
        <taxon>Mycoplasmatota</taxon>
        <taxon>Mollicutes</taxon>
        <taxon>Acholeplasmatales</taxon>
        <taxon>Acholeplasmataceae</taxon>
        <taxon>Candidatus Phytoplasma</taxon>
        <taxon>16SrI (Aster yellows group)</taxon>
    </lineage>
</organism>
<gene>
    <name evidence="1" type="primary">pnp</name>
    <name type="ordered locus">PAM_251</name>
</gene>
<keyword id="KW-0963">Cytoplasm</keyword>
<keyword id="KW-0460">Magnesium</keyword>
<keyword id="KW-0479">Metal-binding</keyword>
<keyword id="KW-0548">Nucleotidyltransferase</keyword>
<keyword id="KW-0694">RNA-binding</keyword>
<keyword id="KW-0808">Transferase</keyword>
<protein>
    <recommendedName>
        <fullName evidence="1">Polyribonucleotide nucleotidyltransferase</fullName>
        <ecNumber evidence="1">2.7.7.8</ecNumber>
    </recommendedName>
    <alternativeName>
        <fullName evidence="1">Polynucleotide phosphorylase</fullName>
        <shortName evidence="1">PNPase</shortName>
    </alternativeName>
</protein>
<dbReference type="EC" id="2.7.7.8" evidence="1"/>
<dbReference type="EMBL" id="AP006628">
    <property type="protein sequence ID" value="BAD04336.1"/>
    <property type="molecule type" value="Genomic_DNA"/>
</dbReference>
<dbReference type="SMR" id="Q6YQX2"/>
<dbReference type="STRING" id="262768.PAM_251"/>
<dbReference type="KEGG" id="poy:PAM_251"/>
<dbReference type="eggNOG" id="COG1185">
    <property type="taxonomic scope" value="Bacteria"/>
</dbReference>
<dbReference type="HOGENOM" id="CLU_004217_2_2_14"/>
<dbReference type="BioCyc" id="OYEL262768:G1G26-308-MONOMER"/>
<dbReference type="Proteomes" id="UP000002523">
    <property type="component" value="Chromosome"/>
</dbReference>
<dbReference type="GO" id="GO:0005829">
    <property type="term" value="C:cytosol"/>
    <property type="evidence" value="ECO:0007669"/>
    <property type="project" value="TreeGrafter"/>
</dbReference>
<dbReference type="GO" id="GO:0000175">
    <property type="term" value="F:3'-5'-RNA exonuclease activity"/>
    <property type="evidence" value="ECO:0007669"/>
    <property type="project" value="TreeGrafter"/>
</dbReference>
<dbReference type="GO" id="GO:0000287">
    <property type="term" value="F:magnesium ion binding"/>
    <property type="evidence" value="ECO:0007669"/>
    <property type="project" value="UniProtKB-UniRule"/>
</dbReference>
<dbReference type="GO" id="GO:0004654">
    <property type="term" value="F:polyribonucleotide nucleotidyltransferase activity"/>
    <property type="evidence" value="ECO:0007669"/>
    <property type="project" value="UniProtKB-UniRule"/>
</dbReference>
<dbReference type="GO" id="GO:0003723">
    <property type="term" value="F:RNA binding"/>
    <property type="evidence" value="ECO:0007669"/>
    <property type="project" value="UniProtKB-UniRule"/>
</dbReference>
<dbReference type="GO" id="GO:0006402">
    <property type="term" value="P:mRNA catabolic process"/>
    <property type="evidence" value="ECO:0007669"/>
    <property type="project" value="UniProtKB-UniRule"/>
</dbReference>
<dbReference type="CDD" id="cd02393">
    <property type="entry name" value="KH-I_PNPase"/>
    <property type="match status" value="1"/>
</dbReference>
<dbReference type="CDD" id="cd11364">
    <property type="entry name" value="RNase_PH_PNPase_2"/>
    <property type="match status" value="1"/>
</dbReference>
<dbReference type="FunFam" id="3.30.1370.10:FF:000001">
    <property type="entry name" value="Polyribonucleotide nucleotidyltransferase"/>
    <property type="match status" value="1"/>
</dbReference>
<dbReference type="FunFam" id="3.30.230.70:FF:000001">
    <property type="entry name" value="Polyribonucleotide nucleotidyltransferase"/>
    <property type="match status" value="1"/>
</dbReference>
<dbReference type="FunFam" id="3.30.230.70:FF:000002">
    <property type="entry name" value="Polyribonucleotide nucleotidyltransferase"/>
    <property type="match status" value="1"/>
</dbReference>
<dbReference type="Gene3D" id="3.30.230.70">
    <property type="entry name" value="GHMP Kinase, N-terminal domain"/>
    <property type="match status" value="2"/>
</dbReference>
<dbReference type="Gene3D" id="3.30.1370.10">
    <property type="entry name" value="K Homology domain, type 1"/>
    <property type="match status" value="1"/>
</dbReference>
<dbReference type="Gene3D" id="2.40.50.140">
    <property type="entry name" value="Nucleic acid-binding proteins"/>
    <property type="match status" value="1"/>
</dbReference>
<dbReference type="HAMAP" id="MF_01595">
    <property type="entry name" value="PNPase"/>
    <property type="match status" value="1"/>
</dbReference>
<dbReference type="InterPro" id="IPR001247">
    <property type="entry name" value="ExoRNase_PH_dom1"/>
</dbReference>
<dbReference type="InterPro" id="IPR015847">
    <property type="entry name" value="ExoRNase_PH_dom2"/>
</dbReference>
<dbReference type="InterPro" id="IPR036345">
    <property type="entry name" value="ExoRNase_PH_dom2_sf"/>
</dbReference>
<dbReference type="InterPro" id="IPR004087">
    <property type="entry name" value="KH_dom"/>
</dbReference>
<dbReference type="InterPro" id="IPR004088">
    <property type="entry name" value="KH_dom_type_1"/>
</dbReference>
<dbReference type="InterPro" id="IPR036612">
    <property type="entry name" value="KH_dom_type_1_sf"/>
</dbReference>
<dbReference type="InterPro" id="IPR012340">
    <property type="entry name" value="NA-bd_OB-fold"/>
</dbReference>
<dbReference type="InterPro" id="IPR012162">
    <property type="entry name" value="PNPase"/>
</dbReference>
<dbReference type="InterPro" id="IPR027408">
    <property type="entry name" value="PNPase/RNase_PH_dom_sf"/>
</dbReference>
<dbReference type="InterPro" id="IPR020568">
    <property type="entry name" value="Ribosomal_Su5_D2-typ_SF"/>
</dbReference>
<dbReference type="InterPro" id="IPR003029">
    <property type="entry name" value="S1_domain"/>
</dbReference>
<dbReference type="NCBIfam" id="TIGR03591">
    <property type="entry name" value="polynuc_phos"/>
    <property type="match status" value="1"/>
</dbReference>
<dbReference type="NCBIfam" id="NF008805">
    <property type="entry name" value="PRK11824.1"/>
    <property type="match status" value="1"/>
</dbReference>
<dbReference type="PANTHER" id="PTHR11252">
    <property type="entry name" value="POLYRIBONUCLEOTIDE NUCLEOTIDYLTRANSFERASE"/>
    <property type="match status" value="1"/>
</dbReference>
<dbReference type="PANTHER" id="PTHR11252:SF0">
    <property type="entry name" value="POLYRIBONUCLEOTIDE NUCLEOTIDYLTRANSFERASE 1, MITOCHONDRIAL"/>
    <property type="match status" value="1"/>
</dbReference>
<dbReference type="Pfam" id="PF00013">
    <property type="entry name" value="KH_1"/>
    <property type="match status" value="1"/>
</dbReference>
<dbReference type="Pfam" id="PF01138">
    <property type="entry name" value="RNase_PH"/>
    <property type="match status" value="2"/>
</dbReference>
<dbReference type="Pfam" id="PF03725">
    <property type="entry name" value="RNase_PH_C"/>
    <property type="match status" value="1"/>
</dbReference>
<dbReference type="PIRSF" id="PIRSF005499">
    <property type="entry name" value="PNPase"/>
    <property type="match status" value="1"/>
</dbReference>
<dbReference type="SMART" id="SM00322">
    <property type="entry name" value="KH"/>
    <property type="match status" value="1"/>
</dbReference>
<dbReference type="SMART" id="SM00316">
    <property type="entry name" value="S1"/>
    <property type="match status" value="1"/>
</dbReference>
<dbReference type="SUPFAM" id="SSF54791">
    <property type="entry name" value="Eukaryotic type KH-domain (KH-domain type I)"/>
    <property type="match status" value="1"/>
</dbReference>
<dbReference type="SUPFAM" id="SSF50249">
    <property type="entry name" value="Nucleic acid-binding proteins"/>
    <property type="match status" value="1"/>
</dbReference>
<dbReference type="SUPFAM" id="SSF55666">
    <property type="entry name" value="Ribonuclease PH domain 2-like"/>
    <property type="match status" value="2"/>
</dbReference>
<dbReference type="SUPFAM" id="SSF54211">
    <property type="entry name" value="Ribosomal protein S5 domain 2-like"/>
    <property type="match status" value="2"/>
</dbReference>
<dbReference type="PROSITE" id="PS50084">
    <property type="entry name" value="KH_TYPE_1"/>
    <property type="match status" value="1"/>
</dbReference>
<dbReference type="PROSITE" id="PS50126">
    <property type="entry name" value="S1"/>
    <property type="match status" value="1"/>
</dbReference>
<feature type="chain" id="PRO_0000329745" description="Polyribonucleotide nucleotidyltransferase">
    <location>
        <begin position="1"/>
        <end position="715"/>
    </location>
</feature>
<feature type="domain" description="KH" evidence="1">
    <location>
        <begin position="565"/>
        <end position="625"/>
    </location>
</feature>
<feature type="domain" description="S1 motif" evidence="1">
    <location>
        <begin position="635"/>
        <end position="706"/>
    </location>
</feature>
<feature type="binding site" evidence="1">
    <location>
        <position position="498"/>
    </location>
    <ligand>
        <name>Mg(2+)</name>
        <dbReference type="ChEBI" id="CHEBI:18420"/>
    </ligand>
</feature>
<feature type="binding site" evidence="1">
    <location>
        <position position="504"/>
    </location>
    <ligand>
        <name>Mg(2+)</name>
        <dbReference type="ChEBI" id="CHEBI:18420"/>
    </ligand>
</feature>